<keyword id="KW-0017">Alkaloid metabolism</keyword>
<keyword id="KW-0025">Alternative splicing</keyword>
<keyword id="KW-0808">Transferase</keyword>
<reference key="1">
    <citation type="journal article" date="1999" name="Mol. Gen. Genet.">
        <title>Evidence for an ergot alkaloid gene cluster in Claviceps purpurea.</title>
        <authorList>
            <person name="Tudzynski P."/>
            <person name="Hoelter K."/>
            <person name="Correia T.H."/>
            <person name="Arntz C."/>
            <person name="Grammel N."/>
            <person name="Keller U."/>
        </authorList>
    </citation>
    <scope>NUCLEOTIDE SEQUENCE [GENOMIC DNA] (ISOFORM 1)</scope>
    <scope>IDENTIFICATION IN THE EAS CLUSTER</scope>
    <scope>FUNCTION</scope>
    <source>
        <strain>P1 / 1029/N5</strain>
    </source>
</reference>
<reference key="2">
    <citation type="journal article" date="2004" name="Fungal Genet. Biol.">
        <title>The determinant step in ergot alkaloid biosynthesis by an endophyte of perennial ryegrass.</title>
        <authorList>
            <person name="Wang J."/>
            <person name="Machado C."/>
            <person name="Panaccione D.G."/>
            <person name="Tsai H.-F."/>
            <person name="Schardl C.L."/>
        </authorList>
    </citation>
    <scope>NUCLEOTIDE SEQUENCE [GENOMIC DNA] (ISOFORMS 1 AND 2)</scope>
    <scope>FUNCTION</scope>
    <scope>CATALYTIC ACTIVITY</scope>
    <scope>PATHWAY</scope>
    <source>
        <strain>ATCC 20102 / Farmitalia FI 32/17</strain>
    </source>
</reference>
<reference key="3">
    <citation type="journal article" date="2001" name="Appl. Microbiol. Biotechnol.">
        <title>Biotechnology and genetics of ergot alkaloids.</title>
        <authorList>
            <person name="Tudzynski P."/>
            <person name="Correia T."/>
            <person name="Keller U."/>
        </authorList>
    </citation>
    <scope>BIOTECHNOLOGY</scope>
    <source>
        <strain>P1 / 1029/N5</strain>
    </source>
</reference>
<reference key="4">
    <citation type="journal article" date="2003" name="Chem. Biol.">
        <title>Molecular cloning and analysis of the ergopeptine assembly system in the ergot fungus Claviceps purpurea.</title>
        <authorList>
            <person name="Correia T."/>
            <person name="Grammel N."/>
            <person name="Ortel I."/>
            <person name="Keller U."/>
            <person name="Tudzynski P."/>
        </authorList>
    </citation>
    <scope>FUNCTION</scope>
</reference>
<reference key="5">
    <citation type="journal article" date="2005" name="Phytochemistry">
        <title>The ergot alkaloid gene cluster in Claviceps purpurea: extension of the cluster sequence and intra species evolution.</title>
        <authorList>
            <person name="Haarmann T."/>
            <person name="Machado C."/>
            <person name="Lubbe Y."/>
            <person name="Correia T."/>
            <person name="Schardl C.L."/>
            <person name="Panaccione D.G."/>
            <person name="Tudzynski P."/>
        </authorList>
    </citation>
    <scope>FUNCTION</scope>
    <scope>IDENTIFICATION IN THE EAS CLUSTER</scope>
</reference>
<reference key="6">
    <citation type="journal article" date="2006" name="ChemBioChem">
        <title>Identification of the cytochrome P450 monooxygenase that bridges the clavine and ergoline alkaloid pathways.</title>
        <authorList>
            <person name="Haarmann T."/>
            <person name="Ortel I."/>
            <person name="Tudzynski P."/>
            <person name="Keller U."/>
        </authorList>
    </citation>
    <scope>FUNCTION</scope>
    <source>
        <strain>P1 / 1029/N5</strain>
    </source>
</reference>
<reference key="7">
    <citation type="journal article" date="2007" name="Appl. Environ. Microbiol.">
        <title>A complex ergovaline gene cluster in epichloe endophytes of grasses.</title>
        <authorList>
            <person name="Fleetwood D.J."/>
            <person name="Scott B."/>
            <person name="Lane G.A."/>
            <person name="Tanaka A."/>
            <person name="Johnson R.D."/>
        </authorList>
    </citation>
    <scope>FUNCTION</scope>
</reference>
<reference key="8">
    <citation type="journal article" date="2007" name="Appl. Environ. Microbiol.">
        <title>Comparison of ergot alkaloid biosynthesis gene clusters in Claviceps species indicates loss of late pathway steps in evolution of C. fusiformis.</title>
        <authorList>
            <person name="Lorenz N."/>
            <person name="Wilson E.V."/>
            <person name="Machado C."/>
            <person name="Schardl C.L."/>
            <person name="Tudzynski P."/>
        </authorList>
    </citation>
    <scope>FUNCTION</scope>
</reference>
<reference key="9">
    <citation type="journal article" date="2008" name="Fungal Genet. Biol.">
        <title>Use of a nonhomologous end joining deficient strain (Deltaku70) of the ergot fungus Claviceps purpurea for identification of a nonribosomal peptide synthetase gene involved in ergotamine biosynthesis.</title>
        <authorList>
            <person name="Haarmann T."/>
            <person name="Lorenz N."/>
            <person name="Tudzynski P."/>
        </authorList>
    </citation>
    <scope>FUNCTION</scope>
</reference>
<reference key="10">
    <citation type="journal article" date="2009" name="J. Biol. Chem.">
        <title>Combinatorial assembly of simple and complex D-lysergic acid alkaloid peptide classes in the ergot fungus Claviceps purpurea.</title>
        <authorList>
            <person name="Ortel I."/>
            <person name="Keller U."/>
        </authorList>
    </citation>
    <scope>FUNCTION</scope>
</reference>
<reference key="11">
    <citation type="journal article" date="2010" name="Appl. Environ. Microbiol.">
        <title>Alkaloid cluster gene ccsA of the ergot fungus Claviceps purpurea encodes chanoclavine I synthase, a flavin adenine dinucleotide-containing oxidoreductase mediating the transformation of N-methyl-dimethylallyltryptophan to chanoclavine I.</title>
        <authorList>
            <person name="Lorenz N."/>
            <person name="Olsovska J."/>
            <person name="Sulc M."/>
            <person name="Tudzynski P."/>
        </authorList>
    </citation>
    <scope>FUNCTION</scope>
</reference>
<reference key="12">
    <citation type="journal article" date="2010" name="J. Am. Chem. Soc.">
        <title>Controlling a structural branch point in ergot alkaloid biosynthesis.</title>
        <authorList>
            <person name="Cheng J.Z."/>
            <person name="Coyle C.M."/>
            <person name="Panaccione D.G."/>
            <person name="O'Connor S.E."/>
        </authorList>
    </citation>
    <scope>FUNCTION</scope>
    <source>
        <strain>ATCC 20102 / Farmitalia FI 32/17</strain>
    </source>
</reference>
<reference key="13">
    <citation type="journal article" date="2011" name="Curr. Genet.">
        <title>Ergot cluster-encoded catalase is required for synthesis of chanoclavine-I in Aspergillus fumigatus.</title>
        <authorList>
            <person name="Goetz K.E."/>
            <person name="Coyle C.M."/>
            <person name="Cheng J.Z."/>
            <person name="O'Connor S.E."/>
            <person name="Panaccione D.G."/>
        </authorList>
    </citation>
    <scope>FUNCTION</scope>
</reference>
<reference key="14">
    <citation type="journal article" date="2011" name="Org. Biomol. Chem.">
        <title>New insights into ergot alkaloid biosynthesis in Claviceps purpurea: an agroclavine synthase EasG catalyses, via a non-enzymatic adduct with reduced glutathione, the conversion of chanoclavine-I aldehyde to agroclavine.</title>
        <authorList>
            <person name="Matuschek M."/>
            <person name="Wallwey C."/>
            <person name="Xie X."/>
            <person name="Li S.M."/>
        </authorList>
    </citation>
    <scope>FUNCTION</scope>
</reference>
<reference key="15">
    <citation type="journal article" date="2014" name="Chem. Biol.">
        <title>Cyclolization of D-lysergic acid alkaloid peptides.</title>
        <authorList>
            <person name="Havemann J."/>
            <person name="Vogel D."/>
            <person name="Loll B."/>
            <person name="Keller U."/>
        </authorList>
    </citation>
    <scope>FUNCTION</scope>
</reference>
<evidence type="ECO:0000250" key="1">
    <source>
        <dbReference type="UniProtKB" id="Q50EL0"/>
    </source>
</evidence>
<evidence type="ECO:0000269" key="2">
    <source>
    </source>
</evidence>
<evidence type="ECO:0000269" key="3">
    <source>
    </source>
</evidence>
<evidence type="ECO:0000269" key="4">
    <source>
    </source>
</evidence>
<evidence type="ECO:0000269" key="5">
    <source>
    </source>
</evidence>
<evidence type="ECO:0000269" key="6">
    <source>
    </source>
</evidence>
<evidence type="ECO:0000269" key="7">
    <source>
    </source>
</evidence>
<evidence type="ECO:0000269" key="8">
    <source>
    </source>
</evidence>
<evidence type="ECO:0000269" key="9">
    <source>
    </source>
</evidence>
<evidence type="ECO:0000269" key="10">
    <source>
    </source>
</evidence>
<evidence type="ECO:0000269" key="11">
    <source>
    </source>
</evidence>
<evidence type="ECO:0000269" key="12">
    <source>
    </source>
</evidence>
<evidence type="ECO:0000269" key="13">
    <source>
    </source>
</evidence>
<evidence type="ECO:0000303" key="14">
    <source>
    </source>
</evidence>
<evidence type="ECO:0000303" key="15">
    <source>
    </source>
</evidence>
<evidence type="ECO:0000305" key="16"/>
<evidence type="ECO:0000305" key="17">
    <source>
    </source>
</evidence>
<evidence type="ECO:0000305" key="18">
    <source>
    </source>
</evidence>
<evidence type="ECO:0000305" key="19">
    <source>
    </source>
</evidence>
<protein>
    <recommendedName>
        <fullName evidence="16">Tryptophan dimethylallyltransferase 1</fullName>
        <ecNumber evidence="4">2.5.1.34</ecNumber>
    </recommendedName>
    <alternativeName>
        <fullName evidence="14">4-dimethylallyltryptophan synthase 1</fullName>
        <shortName evidence="14">DMATS 1</shortName>
    </alternativeName>
    <alternativeName>
        <fullName evidence="16">All-trans-hexaprenyl-diphosphate synthase 1</fullName>
    </alternativeName>
    <alternativeName>
        <fullName evidence="16">L-tryptophan dimethylallyl transferase 1</fullName>
    </alternativeName>
</protein>
<comment type="function">
    <text evidence="1 2 3 4 5 6 7 8 9 10 11 12 13 18 19">Tryptophan dimethylallyltransferase; part of the gene cluster that mediates the biosynthesis of fungal ergot alkaloid (PubMed:10071219, PubMed:14700635, PubMed:14732265, PubMed:15904941, PubMed:17308187, PubMed:17720822). DmaW catalyzes the first step of ergot alkaloid biosynthesis by condensing dimethylallyl diphosphate (DMAP) and tryptophan to form 4-dimethylallyl-L-tryptophan (PubMed:14732265). The second step is catalyzed by the methyltransferase easF that methylates 4-dimethylallyl-L-tryptophan in the presence of S-adenosyl-L-methionine, resulting in the formation of 4-dimethylallyl-L-abrine (By similarity). The catalase easC and the FAD-dependent oxidoreductase easE then transform 4-dimethylallyl-L-abrine to chanoclavine-I which is further oxidized by easD in the presence of NAD(+), resulting in the formation of chanoclavine-I aldehyde (PubMed:20118373, PubMed:21409592). Agroclavine dehydrogenase easG then mediates the conversion of chanoclavine-I aldehyde to agroclavine via a non-enzymatic adduct reaction: the substrate is an iminium intermediate that is formed spontaneously from chanoclavine-I aldehyde in the presence of glutathione (PubMed:20735127, PubMed:21494745). The presence of easA is not required to complete this reaction (PubMed:21494745). Further conversion of agroclavine to paspalic acid is a two-step process involving oxidation of agroclavine to elymoclavine and of elymoclavine to paspalic acid, the second step being performed by the elymoclavine oxidase cloA (PubMed:16538694, PubMed:17720822). Paspalic acid is then further converted to D-lysergic acid (PubMed:15904941). Ergopeptines are assembled from D-lysergic acid and three different amino acids by the D-lysergyl-peptide-synthetases composed each of a monomudular and a trimodular nonribosomal peptide synthetase subunit (PubMed:14700635, PubMed:15904941). LpsB and lpsC encode the monomodular subunits responsible for D-lysergic acid activation and incorporation into the ergopeptine backbone (PubMed:14700635). LpsA1 and A2 subunits encode the trimodular nonribosomal peptide synthetase assembling the tripeptide portion of ergopeptines (PubMed:14700635). LpsA1 is responsible for formation of the major ergopeptine, ergotamine, and lpsA2 for alpha-ergocryptine, the minor ergopeptine of the total alkaloid mixture elaborated by C.purpurea (PubMed:17560817, PubMed:19139103). D-lysergyl-tripeptides are assembled by the nonribosomal peptide synthetases and released as N-(D-lysergyl-aminoacyl)-lactams (PubMed:24361048). Cyclolization of the D-lysergyl-tripeptides is performed by the Fe(2+)/2-ketoglutarate-dependent dioxygenase easH which introduces a hydroxyl group into N-(D-lysergyl-aminoacyl)-lactam at alpha-C of the aminoacyl residue followed by spontaneous condensation with the terminal lactam carbonyl group (PubMed:24361048).</text>
</comment>
<comment type="catalytic activity">
    <reaction evidence="4">
        <text>L-tryptophan + dimethylallyl diphosphate = 4-(3-methylbut-2-enyl)-L-tryptophan + diphosphate</text>
        <dbReference type="Rhea" id="RHEA:14173"/>
        <dbReference type="ChEBI" id="CHEBI:33019"/>
        <dbReference type="ChEBI" id="CHEBI:57623"/>
        <dbReference type="ChEBI" id="CHEBI:57912"/>
        <dbReference type="ChEBI" id="CHEBI:58209"/>
        <dbReference type="EC" id="2.5.1.34"/>
    </reaction>
</comment>
<comment type="pathway">
    <text evidence="4">Alkaloid biosynthesis; ergot alkaloid biosynthesis.</text>
</comment>
<comment type="subunit">
    <text evidence="1">Homodimer.</text>
</comment>
<comment type="alternative products">
    <event type="alternative splicing"/>
    <isoform>
        <id>P0CT20-1</id>
        <name>1</name>
        <name>Short</name>
        <sequence type="displayed"/>
    </isoform>
    <isoform>
        <id>P0CT20-2</id>
        <name>2</name>
        <name>Long</name>
        <sequence type="described" ref="VSP_011244"/>
    </isoform>
</comment>
<comment type="biotechnology">
    <text evidence="17">D-lysergic acid amides have been used as medicinal agents for a long time. The pharmacological effects of the various ergot alkaloids and their derivatives are due to the structural similarity of the tetracyclic ring system to neurotransmitters such as noradrenaline, dopamine or serotonin. In addition to migraine or blood pressure regulation, there is a wide spectrum of potential new applications of this interesting group of compounds.</text>
</comment>
<comment type="similarity">
    <text evidence="16">Belongs to the tryptophan dimethylallyltransferase family.</text>
</comment>
<feature type="chain" id="PRO_0000181364" description="Tryptophan dimethylallyltransferase 1">
    <location>
        <begin position="1"/>
        <end position="448"/>
    </location>
</feature>
<feature type="binding site" evidence="1">
    <location>
        <begin position="80"/>
        <end position="81"/>
    </location>
    <ligand>
        <name>L-tryptophan</name>
        <dbReference type="ChEBI" id="CHEBI:57912"/>
    </ligand>
</feature>
<feature type="binding site" evidence="1">
    <location>
        <position position="89"/>
    </location>
    <ligand>
        <name>L-tryptophan</name>
        <dbReference type="ChEBI" id="CHEBI:57912"/>
    </ligand>
</feature>
<feature type="binding site" evidence="1">
    <location>
        <position position="100"/>
    </location>
    <ligand>
        <name>substrate</name>
    </ligand>
</feature>
<feature type="binding site" evidence="1">
    <location>
        <position position="186"/>
    </location>
    <ligand>
        <name>substrate</name>
    </ligand>
</feature>
<feature type="binding site" evidence="1">
    <location>
        <position position="188"/>
    </location>
    <ligand>
        <name>substrate</name>
    </ligand>
</feature>
<feature type="binding site" evidence="1">
    <location>
        <position position="190"/>
    </location>
    <ligand>
        <name>L-tryptophan</name>
        <dbReference type="ChEBI" id="CHEBI:57912"/>
    </ligand>
</feature>
<feature type="binding site" evidence="1">
    <location>
        <position position="249"/>
    </location>
    <ligand>
        <name>L-tryptophan</name>
        <dbReference type="ChEBI" id="CHEBI:57912"/>
    </ligand>
</feature>
<feature type="binding site" evidence="1">
    <location>
        <position position="262"/>
    </location>
    <ligand>
        <name>substrate</name>
    </ligand>
</feature>
<feature type="binding site" evidence="1">
    <location>
        <position position="264"/>
    </location>
    <ligand>
        <name>substrate</name>
    </ligand>
</feature>
<feature type="binding site" evidence="1">
    <location>
        <position position="266"/>
    </location>
    <ligand>
        <name>substrate</name>
    </ligand>
</feature>
<feature type="binding site" evidence="1">
    <location>
        <position position="348"/>
    </location>
    <ligand>
        <name>substrate</name>
    </ligand>
</feature>
<feature type="binding site" evidence="1">
    <location>
        <position position="350"/>
    </location>
    <ligand>
        <name>substrate</name>
    </ligand>
</feature>
<feature type="binding site" evidence="1">
    <location>
        <position position="414"/>
    </location>
    <ligand>
        <name>substrate</name>
    </ligand>
</feature>
<feature type="binding site" evidence="1">
    <location>
        <position position="418"/>
    </location>
    <ligand>
        <name>substrate</name>
    </ligand>
</feature>
<feature type="splice variant" id="VSP_011244" description="In isoform 2." evidence="16">
    <original>M</original>
    <variation>MCETEVDSLSCPKVNAA</variation>
    <location>
        <position position="1"/>
    </location>
</feature>
<sequence>MSTAKDPGNGVYEILSLIFDFPSNEQRLWWHSTAPMFAAMLDNAGYNIHDQYRHLGIFKKHIIPFLGVYPTKDKERWLSILTRCGLPLELSLNCTDSVVRYTYEPINEVTGTEKDTFNTLAIMTSVQKLAQIQAGIDLEWFSYFKDELTLDESESATLQSNELVKEQIKTQNKLALDLKESQFALKVYFYPHLKSIATGKSTHDLIFDSVLKLSQKHDSIQPAFQVLCDYVSRRNHSAEVDQHGALHARLLSCDLIDPAKSRVKIYLLEKTVSLSVMEDLWTLGGQRVDASTMDGLDMLRELWSLLKVPTGHLEYPKGYLELGEIPNEQLPSMANYTLHHNDPMPEPQVYFTVFGMNDAEISNALTIFFQRHGFDDMAKNYRVFLQDSYPYHDFESLNYLHAYISFSYRRNKPYLSVYLHTFETGRWPVFADSPISFDAYRRCELSTK</sequence>
<gene>
    <name evidence="15" type="primary">dmaW</name>
    <name evidence="14" type="synonym">cpd1</name>
    <name type="synonym">dmaW1</name>
</gene>
<name>DMAW_CLAPU</name>
<dbReference type="EC" id="2.5.1.34" evidence="4"/>
<dbReference type="EMBL" id="AJ011963">
    <property type="protein sequence ID" value="CAB39314.1"/>
    <property type="molecule type" value="Genomic_DNA"/>
</dbReference>
<dbReference type="EMBL" id="AY259840">
    <property type="protein sequence ID" value="AAP81209.1"/>
    <property type="molecule type" value="Genomic_DNA"/>
</dbReference>
<dbReference type="EMBL" id="AY259840">
    <property type="protein sequence ID" value="AAP81210.1"/>
    <property type="molecule type" value="Genomic_DNA"/>
</dbReference>
<dbReference type="SMR" id="P0CT20"/>
<dbReference type="VEuPathDB" id="FungiDB:CPUR_04076"/>
<dbReference type="BioCyc" id="MetaCyc:MONOMER-15629"/>
<dbReference type="UniPathway" id="UPA00327"/>
<dbReference type="GO" id="GO:0050364">
    <property type="term" value="F:tryptophan dimethylallyltransferase activity"/>
    <property type="evidence" value="ECO:0007669"/>
    <property type="project" value="UniProtKB-EC"/>
</dbReference>
<dbReference type="GO" id="GO:0035837">
    <property type="term" value="P:ergot alkaloid biosynthetic process"/>
    <property type="evidence" value="ECO:0007669"/>
    <property type="project" value="InterPro"/>
</dbReference>
<dbReference type="CDD" id="cd13929">
    <property type="entry name" value="PT-DMATS_CymD"/>
    <property type="match status" value="1"/>
</dbReference>
<dbReference type="InterPro" id="IPR033964">
    <property type="entry name" value="Aro_prenylTrfase"/>
</dbReference>
<dbReference type="InterPro" id="IPR017795">
    <property type="entry name" value="Aro_prenylTrfase_DMATS"/>
</dbReference>
<dbReference type="InterPro" id="IPR012148">
    <property type="entry name" value="DMATS-type_fun"/>
</dbReference>
<dbReference type="InterPro" id="IPR017796">
    <property type="entry name" value="Trp_dimethylallylTrfase"/>
</dbReference>
<dbReference type="NCBIfam" id="TIGR03429">
    <property type="entry name" value="arom_pren_DMATS"/>
    <property type="match status" value="1"/>
</dbReference>
<dbReference type="NCBIfam" id="TIGR03430">
    <property type="entry name" value="trp_dimet_allyl"/>
    <property type="match status" value="1"/>
</dbReference>
<dbReference type="PANTHER" id="PTHR40627">
    <property type="entry name" value="INDOLE PRENYLTRANSFERASE TDIB-RELATED"/>
    <property type="match status" value="1"/>
</dbReference>
<dbReference type="PANTHER" id="PTHR40627:SF3">
    <property type="entry name" value="PRENYLTRANSFERASE ASQH2-RELATED"/>
    <property type="match status" value="1"/>
</dbReference>
<dbReference type="Pfam" id="PF11991">
    <property type="entry name" value="Trp_DMAT"/>
    <property type="match status" value="1"/>
</dbReference>
<dbReference type="PIRSF" id="PIRSF000509">
    <property type="entry name" value="Trp_DMAT"/>
    <property type="match status" value="1"/>
</dbReference>
<dbReference type="SFLD" id="SFLDS00036">
    <property type="entry name" value="Aromatic_Prenyltransferase"/>
    <property type="match status" value="1"/>
</dbReference>
<dbReference type="SFLD" id="SFLDG01162">
    <property type="entry name" value="I"/>
    <property type="match status" value="1"/>
</dbReference>
<accession>P0CT20</accession>
<accession>O94204</accession>
<accession>Q6X2E0</accession>
<accession>Q9C140</accession>
<organism>
    <name type="scientific">Claviceps purpurea</name>
    <name type="common">Ergot fungus</name>
    <name type="synonym">Sphacelia segetum</name>
    <dbReference type="NCBI Taxonomy" id="5111"/>
    <lineage>
        <taxon>Eukaryota</taxon>
        <taxon>Fungi</taxon>
        <taxon>Dikarya</taxon>
        <taxon>Ascomycota</taxon>
        <taxon>Pezizomycotina</taxon>
        <taxon>Sordariomycetes</taxon>
        <taxon>Hypocreomycetidae</taxon>
        <taxon>Hypocreales</taxon>
        <taxon>Clavicipitaceae</taxon>
        <taxon>Claviceps</taxon>
    </lineage>
</organism>
<proteinExistence type="evidence at protein level"/>